<gene>
    <name evidence="1" type="primary">dapB</name>
    <name type="ordered locus">Tola_1025</name>
</gene>
<comment type="function">
    <text evidence="1">Catalyzes the conversion of 4-hydroxy-tetrahydrodipicolinate (HTPA) to tetrahydrodipicolinate.</text>
</comment>
<comment type="catalytic activity">
    <reaction evidence="1">
        <text>(S)-2,3,4,5-tetrahydrodipicolinate + NAD(+) + H2O = (2S,4S)-4-hydroxy-2,3,4,5-tetrahydrodipicolinate + NADH + H(+)</text>
        <dbReference type="Rhea" id="RHEA:35323"/>
        <dbReference type="ChEBI" id="CHEBI:15377"/>
        <dbReference type="ChEBI" id="CHEBI:15378"/>
        <dbReference type="ChEBI" id="CHEBI:16845"/>
        <dbReference type="ChEBI" id="CHEBI:57540"/>
        <dbReference type="ChEBI" id="CHEBI:57945"/>
        <dbReference type="ChEBI" id="CHEBI:67139"/>
        <dbReference type="EC" id="1.17.1.8"/>
    </reaction>
</comment>
<comment type="catalytic activity">
    <reaction evidence="1">
        <text>(S)-2,3,4,5-tetrahydrodipicolinate + NADP(+) + H2O = (2S,4S)-4-hydroxy-2,3,4,5-tetrahydrodipicolinate + NADPH + H(+)</text>
        <dbReference type="Rhea" id="RHEA:35331"/>
        <dbReference type="ChEBI" id="CHEBI:15377"/>
        <dbReference type="ChEBI" id="CHEBI:15378"/>
        <dbReference type="ChEBI" id="CHEBI:16845"/>
        <dbReference type="ChEBI" id="CHEBI:57783"/>
        <dbReference type="ChEBI" id="CHEBI:58349"/>
        <dbReference type="ChEBI" id="CHEBI:67139"/>
        <dbReference type="EC" id="1.17.1.8"/>
    </reaction>
</comment>
<comment type="pathway">
    <text evidence="1">Amino-acid biosynthesis; L-lysine biosynthesis via DAP pathway; (S)-tetrahydrodipicolinate from L-aspartate: step 4/4.</text>
</comment>
<comment type="subcellular location">
    <subcellularLocation>
        <location evidence="1">Cytoplasm</location>
    </subcellularLocation>
</comment>
<comment type="similarity">
    <text evidence="1">Belongs to the DapB family.</text>
</comment>
<comment type="caution">
    <text evidence="2">Was originally thought to be a dihydrodipicolinate reductase (DHDPR), catalyzing the conversion of dihydrodipicolinate to tetrahydrodipicolinate. However, it was shown in E.coli that the substrate of the enzymatic reaction is not dihydrodipicolinate (DHDP) but in fact (2S,4S)-4-hydroxy-2,3,4,5-tetrahydrodipicolinic acid (HTPA), the product released by the DapA-catalyzed reaction.</text>
</comment>
<evidence type="ECO:0000255" key="1">
    <source>
        <dbReference type="HAMAP-Rule" id="MF_00102"/>
    </source>
</evidence>
<evidence type="ECO:0000305" key="2"/>
<accession>C4LCT8</accession>
<keyword id="KW-0028">Amino-acid biosynthesis</keyword>
<keyword id="KW-0963">Cytoplasm</keyword>
<keyword id="KW-0220">Diaminopimelate biosynthesis</keyword>
<keyword id="KW-0457">Lysine biosynthesis</keyword>
<keyword id="KW-0520">NAD</keyword>
<keyword id="KW-0521">NADP</keyword>
<keyword id="KW-0560">Oxidoreductase</keyword>
<keyword id="KW-1185">Reference proteome</keyword>
<sequence>MTAPIRIALMGCQGRMGKALLEAIRANEQVTLGTALERPGSTVIGLDVGDLNGLGAMNVLIADDLEKVKDQFDVIIDFTRPEVTLKNLAFAVANNKRIVIGTTGFDDAGKAAINEAAKKIGIVFASNFSVGVNLVFKLLEQAAKVMGDYTDIEIIEGHHRHKVDAPSGTALSMGEVVAKTLGRDLKQCAVYGREGITGERDRNTIGFATIRAGDLVGEHTVMFADIGERVEITHKASSRLTFANGAVRAANWLKDQPCGLFDMQDVLNLK</sequence>
<organism>
    <name type="scientific">Tolumonas auensis (strain DSM 9187 / NBRC 110442 / TA 4)</name>
    <dbReference type="NCBI Taxonomy" id="595494"/>
    <lineage>
        <taxon>Bacteria</taxon>
        <taxon>Pseudomonadati</taxon>
        <taxon>Pseudomonadota</taxon>
        <taxon>Gammaproteobacteria</taxon>
        <taxon>Aeromonadales</taxon>
        <taxon>Aeromonadaceae</taxon>
        <taxon>Tolumonas</taxon>
    </lineage>
</organism>
<reference key="1">
    <citation type="submission" date="2009-05" db="EMBL/GenBank/DDBJ databases">
        <title>Complete sequence of Tolumonas auensis DSM 9187.</title>
        <authorList>
            <consortium name="US DOE Joint Genome Institute"/>
            <person name="Lucas S."/>
            <person name="Copeland A."/>
            <person name="Lapidus A."/>
            <person name="Glavina del Rio T."/>
            <person name="Tice H."/>
            <person name="Bruce D."/>
            <person name="Goodwin L."/>
            <person name="Pitluck S."/>
            <person name="Chertkov O."/>
            <person name="Brettin T."/>
            <person name="Detter J.C."/>
            <person name="Han C."/>
            <person name="Larimer F."/>
            <person name="Land M."/>
            <person name="Hauser L."/>
            <person name="Kyrpides N."/>
            <person name="Mikhailova N."/>
            <person name="Spring S."/>
            <person name="Beller H."/>
        </authorList>
    </citation>
    <scope>NUCLEOTIDE SEQUENCE [LARGE SCALE GENOMIC DNA]</scope>
    <source>
        <strain>DSM 9187 / NBRC 110442 / TA 4</strain>
    </source>
</reference>
<protein>
    <recommendedName>
        <fullName evidence="1">4-hydroxy-tetrahydrodipicolinate reductase</fullName>
        <shortName evidence="1">HTPA reductase</shortName>
        <ecNumber evidence="1">1.17.1.8</ecNumber>
    </recommendedName>
</protein>
<feature type="chain" id="PRO_1000202821" description="4-hydroxy-tetrahydrodipicolinate reductase">
    <location>
        <begin position="1"/>
        <end position="270"/>
    </location>
</feature>
<feature type="active site" description="Proton donor/acceptor" evidence="1">
    <location>
        <position position="158"/>
    </location>
</feature>
<feature type="active site" description="Proton donor" evidence="1">
    <location>
        <position position="162"/>
    </location>
</feature>
<feature type="binding site" evidence="1">
    <location>
        <begin position="11"/>
        <end position="16"/>
    </location>
    <ligand>
        <name>NAD(+)</name>
        <dbReference type="ChEBI" id="CHEBI:57540"/>
    </ligand>
</feature>
<feature type="binding site" evidence="1">
    <location>
        <position position="37"/>
    </location>
    <ligand>
        <name>NAD(+)</name>
        <dbReference type="ChEBI" id="CHEBI:57540"/>
    </ligand>
</feature>
<feature type="binding site" evidence="1">
    <location>
        <position position="38"/>
    </location>
    <ligand>
        <name>NADP(+)</name>
        <dbReference type="ChEBI" id="CHEBI:58349"/>
    </ligand>
</feature>
<feature type="binding site" evidence="1">
    <location>
        <begin position="101"/>
        <end position="103"/>
    </location>
    <ligand>
        <name>NAD(+)</name>
        <dbReference type="ChEBI" id="CHEBI:57540"/>
    </ligand>
</feature>
<feature type="binding site" evidence="1">
    <location>
        <begin position="125"/>
        <end position="128"/>
    </location>
    <ligand>
        <name>NAD(+)</name>
        <dbReference type="ChEBI" id="CHEBI:57540"/>
    </ligand>
</feature>
<feature type="binding site" evidence="1">
    <location>
        <position position="159"/>
    </location>
    <ligand>
        <name>(S)-2,3,4,5-tetrahydrodipicolinate</name>
        <dbReference type="ChEBI" id="CHEBI:16845"/>
    </ligand>
</feature>
<feature type="binding site" evidence="1">
    <location>
        <begin position="168"/>
        <end position="169"/>
    </location>
    <ligand>
        <name>(S)-2,3,4,5-tetrahydrodipicolinate</name>
        <dbReference type="ChEBI" id="CHEBI:16845"/>
    </ligand>
</feature>
<proteinExistence type="inferred from homology"/>
<name>DAPB_TOLAT</name>
<dbReference type="EC" id="1.17.1.8" evidence="1"/>
<dbReference type="EMBL" id="CP001616">
    <property type="protein sequence ID" value="ACQ92652.1"/>
    <property type="molecule type" value="Genomic_DNA"/>
</dbReference>
<dbReference type="RefSeq" id="WP_012729251.1">
    <property type="nucleotide sequence ID" value="NC_012691.1"/>
</dbReference>
<dbReference type="SMR" id="C4LCT8"/>
<dbReference type="STRING" id="595494.Tola_1025"/>
<dbReference type="KEGG" id="tau:Tola_1025"/>
<dbReference type="eggNOG" id="COG0289">
    <property type="taxonomic scope" value="Bacteria"/>
</dbReference>
<dbReference type="HOGENOM" id="CLU_047479_2_1_6"/>
<dbReference type="OrthoDB" id="9790352at2"/>
<dbReference type="UniPathway" id="UPA00034">
    <property type="reaction ID" value="UER00018"/>
</dbReference>
<dbReference type="Proteomes" id="UP000009073">
    <property type="component" value="Chromosome"/>
</dbReference>
<dbReference type="GO" id="GO:0005829">
    <property type="term" value="C:cytosol"/>
    <property type="evidence" value="ECO:0007669"/>
    <property type="project" value="TreeGrafter"/>
</dbReference>
<dbReference type="GO" id="GO:0008839">
    <property type="term" value="F:4-hydroxy-tetrahydrodipicolinate reductase"/>
    <property type="evidence" value="ECO:0007669"/>
    <property type="project" value="UniProtKB-EC"/>
</dbReference>
<dbReference type="GO" id="GO:0051287">
    <property type="term" value="F:NAD binding"/>
    <property type="evidence" value="ECO:0007669"/>
    <property type="project" value="UniProtKB-UniRule"/>
</dbReference>
<dbReference type="GO" id="GO:0050661">
    <property type="term" value="F:NADP binding"/>
    <property type="evidence" value="ECO:0007669"/>
    <property type="project" value="UniProtKB-UniRule"/>
</dbReference>
<dbReference type="GO" id="GO:0016726">
    <property type="term" value="F:oxidoreductase activity, acting on CH or CH2 groups, NAD or NADP as acceptor"/>
    <property type="evidence" value="ECO:0007669"/>
    <property type="project" value="UniProtKB-UniRule"/>
</dbReference>
<dbReference type="GO" id="GO:0019877">
    <property type="term" value="P:diaminopimelate biosynthetic process"/>
    <property type="evidence" value="ECO:0007669"/>
    <property type="project" value="UniProtKB-UniRule"/>
</dbReference>
<dbReference type="GO" id="GO:0009089">
    <property type="term" value="P:lysine biosynthetic process via diaminopimelate"/>
    <property type="evidence" value="ECO:0007669"/>
    <property type="project" value="UniProtKB-UniRule"/>
</dbReference>
<dbReference type="CDD" id="cd02274">
    <property type="entry name" value="DHDPR_N"/>
    <property type="match status" value="1"/>
</dbReference>
<dbReference type="FunFam" id="3.30.360.10:FF:000004">
    <property type="entry name" value="4-hydroxy-tetrahydrodipicolinate reductase"/>
    <property type="match status" value="1"/>
</dbReference>
<dbReference type="FunFam" id="3.40.50.720:FF:000048">
    <property type="entry name" value="4-hydroxy-tetrahydrodipicolinate reductase"/>
    <property type="match status" value="1"/>
</dbReference>
<dbReference type="Gene3D" id="3.30.360.10">
    <property type="entry name" value="Dihydrodipicolinate Reductase, domain 2"/>
    <property type="match status" value="1"/>
</dbReference>
<dbReference type="Gene3D" id="3.40.50.720">
    <property type="entry name" value="NAD(P)-binding Rossmann-like Domain"/>
    <property type="match status" value="1"/>
</dbReference>
<dbReference type="HAMAP" id="MF_00102">
    <property type="entry name" value="DapB"/>
    <property type="match status" value="1"/>
</dbReference>
<dbReference type="InterPro" id="IPR022663">
    <property type="entry name" value="DapB_C"/>
</dbReference>
<dbReference type="InterPro" id="IPR000846">
    <property type="entry name" value="DapB_N"/>
</dbReference>
<dbReference type="InterPro" id="IPR022664">
    <property type="entry name" value="DapB_N_CS"/>
</dbReference>
<dbReference type="InterPro" id="IPR023940">
    <property type="entry name" value="DHDPR_bac"/>
</dbReference>
<dbReference type="InterPro" id="IPR036291">
    <property type="entry name" value="NAD(P)-bd_dom_sf"/>
</dbReference>
<dbReference type="NCBIfam" id="TIGR00036">
    <property type="entry name" value="dapB"/>
    <property type="match status" value="1"/>
</dbReference>
<dbReference type="PANTHER" id="PTHR20836:SF0">
    <property type="entry name" value="4-HYDROXY-TETRAHYDRODIPICOLINATE REDUCTASE 1, CHLOROPLASTIC-RELATED"/>
    <property type="match status" value="1"/>
</dbReference>
<dbReference type="PANTHER" id="PTHR20836">
    <property type="entry name" value="DIHYDRODIPICOLINATE REDUCTASE"/>
    <property type="match status" value="1"/>
</dbReference>
<dbReference type="Pfam" id="PF05173">
    <property type="entry name" value="DapB_C"/>
    <property type="match status" value="1"/>
</dbReference>
<dbReference type="Pfam" id="PF01113">
    <property type="entry name" value="DapB_N"/>
    <property type="match status" value="1"/>
</dbReference>
<dbReference type="PIRSF" id="PIRSF000161">
    <property type="entry name" value="DHPR"/>
    <property type="match status" value="1"/>
</dbReference>
<dbReference type="SUPFAM" id="SSF55347">
    <property type="entry name" value="Glyceraldehyde-3-phosphate dehydrogenase-like, C-terminal domain"/>
    <property type="match status" value="1"/>
</dbReference>
<dbReference type="SUPFAM" id="SSF51735">
    <property type="entry name" value="NAD(P)-binding Rossmann-fold domains"/>
    <property type="match status" value="1"/>
</dbReference>
<dbReference type="PROSITE" id="PS01298">
    <property type="entry name" value="DAPB"/>
    <property type="match status" value="1"/>
</dbReference>